<gene>
    <name evidence="1" type="primary">yraN</name>
    <name type="ordered locus">EC55989_3568</name>
</gene>
<comment type="similarity">
    <text evidence="1">Belongs to the UPF0102 family.</text>
</comment>
<organism>
    <name type="scientific">Escherichia coli (strain 55989 / EAEC)</name>
    <dbReference type="NCBI Taxonomy" id="585055"/>
    <lineage>
        <taxon>Bacteria</taxon>
        <taxon>Pseudomonadati</taxon>
        <taxon>Pseudomonadota</taxon>
        <taxon>Gammaproteobacteria</taxon>
        <taxon>Enterobacterales</taxon>
        <taxon>Enterobacteriaceae</taxon>
        <taxon>Escherichia</taxon>
    </lineage>
</organism>
<dbReference type="EMBL" id="CU928145">
    <property type="protein sequence ID" value="CAU99763.1"/>
    <property type="molecule type" value="Genomic_DNA"/>
</dbReference>
<dbReference type="RefSeq" id="WP_000246855.1">
    <property type="nucleotide sequence ID" value="NC_011748.1"/>
</dbReference>
<dbReference type="SMR" id="B7LH86"/>
<dbReference type="KEGG" id="eck:EC55989_3568"/>
<dbReference type="HOGENOM" id="CLU_115353_1_0_6"/>
<dbReference type="Proteomes" id="UP000000746">
    <property type="component" value="Chromosome"/>
</dbReference>
<dbReference type="GO" id="GO:0003676">
    <property type="term" value="F:nucleic acid binding"/>
    <property type="evidence" value="ECO:0007669"/>
    <property type="project" value="InterPro"/>
</dbReference>
<dbReference type="CDD" id="cd20736">
    <property type="entry name" value="PoNe_Nuclease"/>
    <property type="match status" value="1"/>
</dbReference>
<dbReference type="Gene3D" id="3.40.1350.10">
    <property type="match status" value="1"/>
</dbReference>
<dbReference type="HAMAP" id="MF_00048">
    <property type="entry name" value="UPF0102"/>
    <property type="match status" value="1"/>
</dbReference>
<dbReference type="InterPro" id="IPR011335">
    <property type="entry name" value="Restrct_endonuc-II-like"/>
</dbReference>
<dbReference type="InterPro" id="IPR011856">
    <property type="entry name" value="tRNA_endonuc-like_dom_sf"/>
</dbReference>
<dbReference type="InterPro" id="IPR003509">
    <property type="entry name" value="UPF0102_YraN-like"/>
</dbReference>
<dbReference type="NCBIfam" id="NF009150">
    <property type="entry name" value="PRK12497.1-3"/>
    <property type="match status" value="1"/>
</dbReference>
<dbReference type="NCBIfam" id="TIGR00252">
    <property type="entry name" value="YraN family protein"/>
    <property type="match status" value="1"/>
</dbReference>
<dbReference type="PANTHER" id="PTHR34039">
    <property type="entry name" value="UPF0102 PROTEIN YRAN"/>
    <property type="match status" value="1"/>
</dbReference>
<dbReference type="PANTHER" id="PTHR34039:SF1">
    <property type="entry name" value="UPF0102 PROTEIN YRAN"/>
    <property type="match status" value="1"/>
</dbReference>
<dbReference type="Pfam" id="PF02021">
    <property type="entry name" value="UPF0102"/>
    <property type="match status" value="1"/>
</dbReference>
<dbReference type="SUPFAM" id="SSF52980">
    <property type="entry name" value="Restriction endonuclease-like"/>
    <property type="match status" value="1"/>
</dbReference>
<protein>
    <recommendedName>
        <fullName evidence="1">UPF0102 protein YraN</fullName>
    </recommendedName>
</protein>
<evidence type="ECO:0000255" key="1">
    <source>
        <dbReference type="HAMAP-Rule" id="MF_00048"/>
    </source>
</evidence>
<evidence type="ECO:0000256" key="2">
    <source>
        <dbReference type="SAM" id="MobiDB-lite"/>
    </source>
</evidence>
<accession>B7LH86</accession>
<feature type="chain" id="PRO_1000200138" description="UPF0102 protein YraN">
    <location>
        <begin position="1"/>
        <end position="131"/>
    </location>
</feature>
<feature type="region of interest" description="Disordered" evidence="2">
    <location>
        <begin position="1"/>
        <end position="20"/>
    </location>
</feature>
<feature type="compositionally biased region" description="Polar residues" evidence="2">
    <location>
        <begin position="1"/>
        <end position="19"/>
    </location>
</feature>
<name>YRAN_ECO55</name>
<sequence>MATVPTRSGSPRQLTTKQTGDAWEVQARRWLEGKGLRFVAANVNERGGEIDLIMREGRTTVFVEVRYRRSALYGGAAASVTRSKQHKLLQTARLWLARHNGSFDTVDCRFDVVAFTGNEVEWIKDAFNDHS</sequence>
<keyword id="KW-1185">Reference proteome</keyword>
<proteinExistence type="inferred from homology"/>
<reference key="1">
    <citation type="journal article" date="2009" name="PLoS Genet.">
        <title>Organised genome dynamics in the Escherichia coli species results in highly diverse adaptive paths.</title>
        <authorList>
            <person name="Touchon M."/>
            <person name="Hoede C."/>
            <person name="Tenaillon O."/>
            <person name="Barbe V."/>
            <person name="Baeriswyl S."/>
            <person name="Bidet P."/>
            <person name="Bingen E."/>
            <person name="Bonacorsi S."/>
            <person name="Bouchier C."/>
            <person name="Bouvet O."/>
            <person name="Calteau A."/>
            <person name="Chiapello H."/>
            <person name="Clermont O."/>
            <person name="Cruveiller S."/>
            <person name="Danchin A."/>
            <person name="Diard M."/>
            <person name="Dossat C."/>
            <person name="Karoui M.E."/>
            <person name="Frapy E."/>
            <person name="Garry L."/>
            <person name="Ghigo J.M."/>
            <person name="Gilles A.M."/>
            <person name="Johnson J."/>
            <person name="Le Bouguenec C."/>
            <person name="Lescat M."/>
            <person name="Mangenot S."/>
            <person name="Martinez-Jehanne V."/>
            <person name="Matic I."/>
            <person name="Nassif X."/>
            <person name="Oztas S."/>
            <person name="Petit M.A."/>
            <person name="Pichon C."/>
            <person name="Rouy Z."/>
            <person name="Ruf C.S."/>
            <person name="Schneider D."/>
            <person name="Tourret J."/>
            <person name="Vacherie B."/>
            <person name="Vallenet D."/>
            <person name="Medigue C."/>
            <person name="Rocha E.P.C."/>
            <person name="Denamur E."/>
        </authorList>
    </citation>
    <scope>NUCLEOTIDE SEQUENCE [LARGE SCALE GENOMIC DNA]</scope>
    <source>
        <strain>55989 / EAEC</strain>
    </source>
</reference>